<name>RGXA_ASPNG</name>
<comment type="function">
    <text evidence="1">Specific in hydrolyzing the terminal glycosidic bond of polygalacturonic acid and oligogalacturonates.</text>
</comment>
<comment type="catalytic activity">
    <reaction>
        <text>[(1-&gt;4)-alpha-D-galacturonosyl](n) + H2O = alpha-D-galacturonate + [(1-&gt;4)-alpha-D-galacturonosyl](n-1)</text>
        <dbReference type="Rhea" id="RHEA:14117"/>
        <dbReference type="Rhea" id="RHEA-COMP:14570"/>
        <dbReference type="Rhea" id="RHEA-COMP:14572"/>
        <dbReference type="ChEBI" id="CHEBI:15377"/>
        <dbReference type="ChEBI" id="CHEBI:58658"/>
        <dbReference type="ChEBI" id="CHEBI:140523"/>
        <dbReference type="EC" id="3.2.1.67"/>
    </reaction>
</comment>
<comment type="subcellular location">
    <subcellularLocation>
        <location evidence="1">Secreted</location>
    </subcellularLocation>
</comment>
<comment type="similarity">
    <text evidence="3">Belongs to the glycosyl hydrolase 28 family.</text>
</comment>
<evidence type="ECO:0000250" key="1"/>
<evidence type="ECO:0000255" key="2"/>
<evidence type="ECO:0000305" key="3"/>
<reference key="1">
    <citation type="journal article" date="2006" name="Biochem. J.">
        <title>A new group of exo-acting family 28 glycoside hydrolases of Aspergillus niger that are involved in pectin degradation.</title>
        <authorList>
            <person name="Martens-Uzunova E.S."/>
            <person name="Zandleven J.S."/>
            <person name="Benen J.A."/>
            <person name="Awad H."/>
            <person name="Kools H.J."/>
            <person name="Beldman G."/>
            <person name="Voragen A.G."/>
            <person name="Van den Berg J.A."/>
            <person name="Schaap P.J."/>
        </authorList>
    </citation>
    <scope>NUCLEOTIDE SEQUENCE [GENOMIC DNA]</scope>
    <source>
        <strain>ATCC 9029 / NRRL 3 / CBS 120.49 / DSM 2466 / N400 / FGSC 732</strain>
    </source>
</reference>
<dbReference type="EC" id="3.2.1.67"/>
<dbReference type="EMBL" id="DQ369753">
    <property type="protein sequence ID" value="ABD14403.1"/>
    <property type="molecule type" value="mRNA"/>
</dbReference>
<dbReference type="SMR" id="Q2EQQ2"/>
<dbReference type="CAZy" id="GH28">
    <property type="family name" value="Glycoside Hydrolase Family 28"/>
</dbReference>
<dbReference type="GlyCosmos" id="Q2EQQ2">
    <property type="glycosylation" value="12 sites, No reported glycans"/>
</dbReference>
<dbReference type="PaxDb" id="5061-CADANGAP00001404"/>
<dbReference type="VEuPathDB" id="FungiDB:An01g14650"/>
<dbReference type="VEuPathDB" id="FungiDB:ASPNIDRAFT2_1171920"/>
<dbReference type="VEuPathDB" id="FungiDB:ATCC64974_11730"/>
<dbReference type="VEuPathDB" id="FungiDB:M747DRAFT_354149"/>
<dbReference type="eggNOG" id="ENOG502QWT4">
    <property type="taxonomic scope" value="Eukaryota"/>
</dbReference>
<dbReference type="GO" id="GO:0005576">
    <property type="term" value="C:extracellular region"/>
    <property type="evidence" value="ECO:0007669"/>
    <property type="project" value="UniProtKB-SubCell"/>
</dbReference>
<dbReference type="GO" id="GO:0047911">
    <property type="term" value="F:galacturan 1,4-alpha-galacturonidase activity"/>
    <property type="evidence" value="ECO:0007669"/>
    <property type="project" value="UniProtKB-EC"/>
</dbReference>
<dbReference type="GO" id="GO:0004650">
    <property type="term" value="F:polygalacturonase activity"/>
    <property type="evidence" value="ECO:0007669"/>
    <property type="project" value="InterPro"/>
</dbReference>
<dbReference type="GO" id="GO:0071555">
    <property type="term" value="P:cell wall organization"/>
    <property type="evidence" value="ECO:0007669"/>
    <property type="project" value="UniProtKB-KW"/>
</dbReference>
<dbReference type="GO" id="GO:0045490">
    <property type="term" value="P:pectin catabolic process"/>
    <property type="evidence" value="ECO:0007669"/>
    <property type="project" value="UniProtKB-ARBA"/>
</dbReference>
<dbReference type="Gene3D" id="2.160.20.10">
    <property type="entry name" value="Single-stranded right-handed beta-helix, Pectin lyase-like"/>
    <property type="match status" value="1"/>
</dbReference>
<dbReference type="InterPro" id="IPR000743">
    <property type="entry name" value="Glyco_hydro_28"/>
</dbReference>
<dbReference type="InterPro" id="IPR006626">
    <property type="entry name" value="PbH1"/>
</dbReference>
<dbReference type="InterPro" id="IPR012334">
    <property type="entry name" value="Pectin_lyas_fold"/>
</dbReference>
<dbReference type="InterPro" id="IPR011050">
    <property type="entry name" value="Pectin_lyase_fold/virulence"/>
</dbReference>
<dbReference type="PANTHER" id="PTHR31736">
    <property type="match status" value="1"/>
</dbReference>
<dbReference type="PANTHER" id="PTHR31736:SF12">
    <property type="entry name" value="EXO-POLYGALACTURONASE, PUTATIVE-RELATED"/>
    <property type="match status" value="1"/>
</dbReference>
<dbReference type="Pfam" id="PF00295">
    <property type="entry name" value="Glyco_hydro_28"/>
    <property type="match status" value="1"/>
</dbReference>
<dbReference type="SMART" id="SM00710">
    <property type="entry name" value="PbH1"/>
    <property type="match status" value="5"/>
</dbReference>
<dbReference type="SUPFAM" id="SSF51126">
    <property type="entry name" value="Pectin lyase-like"/>
    <property type="match status" value="1"/>
</dbReference>
<sequence length="438" mass="47897">MRMPSAISIGVFAGLSLAASAVPSLRKNGTTCTVIPLGNGQDDVPNILSAVDECGQTSGGRVVLPAPYTYRINQRMTTHLTDSRLEIGGTLLFSDDIDYWVNNSYRVDFQNQSSAWRITGHDYVVDGGPHRGGVDGNGQLWYTWAKGGSNVFGRPMPVHVFESTRATLRNLAIRQPQFWAVLVDSSSHINLDNFYVNATNHDSSVSPEGEWVQNTDGIDTYRSDHITITNWVYQGGDDAVAFKGNSTNIHVENVTVYGGPGIAFGSLGQYPDRTDIVENVTVRNVRVQPSFQRAMNSGVYFKSWIGVNYGVPPNGGGGGHGYVRNVSVENLRLKDVQLPVYIDTCLSYLFSENITQYCDTSTYEFEDLHFRNISGNGLATVTDYPGKNISFAVALLCSEKAPCTDLTFQDISITLPGNYTGKHVLCENAEVEGLPCNS</sequence>
<gene>
    <name type="primary">rgxA</name>
</gene>
<keyword id="KW-0119">Carbohydrate metabolism</keyword>
<keyword id="KW-0961">Cell wall biogenesis/degradation</keyword>
<keyword id="KW-1015">Disulfide bond</keyword>
<keyword id="KW-0325">Glycoprotein</keyword>
<keyword id="KW-0326">Glycosidase</keyword>
<keyword id="KW-0378">Hydrolase</keyword>
<keyword id="KW-0624">Polysaccharide degradation</keyword>
<keyword id="KW-0677">Repeat</keyword>
<keyword id="KW-0964">Secreted</keyword>
<keyword id="KW-0732">Signal</keyword>
<protein>
    <recommendedName>
        <fullName>Putative galacturan 1,4-alpha-galacturonidase A</fullName>
        <ecNumber>3.2.1.67</ecNumber>
    </recommendedName>
    <alternativeName>
        <fullName>Exopolygalacturonase A</fullName>
    </alternativeName>
    <alternativeName>
        <fullName>Exorhamnogalacturonase A</fullName>
    </alternativeName>
    <alternativeName>
        <fullName>Poly(1,4-alpha-D-galacturonide)galacturonohydrolase A</fullName>
    </alternativeName>
</protein>
<feature type="signal peptide" evidence="2">
    <location>
        <begin position="1"/>
        <end position="21"/>
    </location>
</feature>
<feature type="chain" id="PRO_0000395079" description="Putative galacturan 1,4-alpha-galacturonidase A">
    <location>
        <begin position="22"/>
        <end position="438"/>
    </location>
</feature>
<feature type="repeat" description="PbH1 1">
    <location>
        <begin position="186"/>
        <end position="222"/>
    </location>
</feature>
<feature type="repeat" description="PbH1 2">
    <location>
        <begin position="223"/>
        <end position="244"/>
    </location>
</feature>
<feature type="repeat" description="PbH1 3">
    <location>
        <begin position="246"/>
        <end position="266"/>
    </location>
</feature>
<feature type="repeat" description="PbH1 4">
    <location>
        <begin position="277"/>
        <end position="303"/>
    </location>
</feature>
<feature type="repeat" description="PbH1 5">
    <location>
        <begin position="323"/>
        <end position="344"/>
    </location>
</feature>
<feature type="active site" description="Proton donor" evidence="1">
    <location>
        <position position="237"/>
    </location>
</feature>
<feature type="glycosylation site" description="N-linked (GlcNAc...) asparagine" evidence="2">
    <location>
        <position position="28"/>
    </location>
</feature>
<feature type="glycosylation site" description="N-linked (GlcNAc...) asparagine" evidence="2">
    <location>
        <position position="102"/>
    </location>
</feature>
<feature type="glycosylation site" description="N-linked (GlcNAc...) asparagine" evidence="2">
    <location>
        <position position="111"/>
    </location>
</feature>
<feature type="glycosylation site" description="N-linked (GlcNAc...) asparagine" evidence="2">
    <location>
        <position position="197"/>
    </location>
</feature>
<feature type="glycosylation site" description="N-linked (GlcNAc...) asparagine" evidence="2">
    <location>
        <position position="245"/>
    </location>
</feature>
<feature type="glycosylation site" description="N-linked (GlcNAc...) asparagine" evidence="2">
    <location>
        <position position="253"/>
    </location>
</feature>
<feature type="glycosylation site" description="N-linked (GlcNAc...) asparagine" evidence="2">
    <location>
        <position position="279"/>
    </location>
</feature>
<feature type="glycosylation site" description="N-linked (GlcNAc...) asparagine" evidence="2">
    <location>
        <position position="325"/>
    </location>
</feature>
<feature type="glycosylation site" description="N-linked (GlcNAc...) asparagine" evidence="2">
    <location>
        <position position="353"/>
    </location>
</feature>
<feature type="glycosylation site" description="N-linked (GlcNAc...) asparagine" evidence="2">
    <location>
        <position position="372"/>
    </location>
</feature>
<feature type="glycosylation site" description="N-linked (GlcNAc...) asparagine" evidence="2">
    <location>
        <position position="388"/>
    </location>
</feature>
<feature type="glycosylation site" description="N-linked (GlcNAc...) asparagine" evidence="2">
    <location>
        <position position="418"/>
    </location>
</feature>
<feature type="disulfide bond" evidence="1">
    <location>
        <begin position="397"/>
        <end position="403"/>
    </location>
</feature>
<accession>Q2EQQ2</accession>
<organism>
    <name type="scientific">Aspergillus niger</name>
    <dbReference type="NCBI Taxonomy" id="5061"/>
    <lineage>
        <taxon>Eukaryota</taxon>
        <taxon>Fungi</taxon>
        <taxon>Dikarya</taxon>
        <taxon>Ascomycota</taxon>
        <taxon>Pezizomycotina</taxon>
        <taxon>Eurotiomycetes</taxon>
        <taxon>Eurotiomycetidae</taxon>
        <taxon>Eurotiales</taxon>
        <taxon>Aspergillaceae</taxon>
        <taxon>Aspergillus</taxon>
        <taxon>Aspergillus subgen. Circumdati</taxon>
    </lineage>
</organism>
<proteinExistence type="evidence at transcript level"/>